<protein>
    <recommendedName>
        <fullName evidence="1">Putative pre-16S rRNA nuclease</fullName>
        <ecNumber evidence="1">3.1.-.-</ecNumber>
    </recommendedName>
</protein>
<sequence>MRILGLDVGTKTVGVAISDEMGWTAQGLETIKINEERGQFGFDRISELVKQYDVDKIVVGLPKNMNGTIGPRGEACQQFAENLRELLQLDVVMWDERLSTMAAERLLISADVSRKKRKQVIDKMAAVVILQGFLDSK</sequence>
<evidence type="ECO:0000255" key="1">
    <source>
        <dbReference type="HAMAP-Rule" id="MF_00651"/>
    </source>
</evidence>
<gene>
    <name type="ordered locus">BAA_4634</name>
</gene>
<comment type="function">
    <text evidence="1">Could be a nuclease involved in processing of the 5'-end of pre-16S rRNA.</text>
</comment>
<comment type="subcellular location">
    <subcellularLocation>
        <location evidence="1">Cytoplasm</location>
    </subcellularLocation>
</comment>
<comment type="similarity">
    <text evidence="1">Belongs to the YqgF nuclease family.</text>
</comment>
<organism>
    <name type="scientific">Bacillus anthracis (strain A0248)</name>
    <dbReference type="NCBI Taxonomy" id="592021"/>
    <lineage>
        <taxon>Bacteria</taxon>
        <taxon>Bacillati</taxon>
        <taxon>Bacillota</taxon>
        <taxon>Bacilli</taxon>
        <taxon>Bacillales</taxon>
        <taxon>Bacillaceae</taxon>
        <taxon>Bacillus</taxon>
        <taxon>Bacillus cereus group</taxon>
    </lineage>
</organism>
<reference key="1">
    <citation type="submission" date="2009-04" db="EMBL/GenBank/DDBJ databases">
        <title>Genome sequence of Bacillus anthracis A0248.</title>
        <authorList>
            <person name="Dodson R.J."/>
            <person name="Munk A.C."/>
            <person name="Bruce D."/>
            <person name="Detter C."/>
            <person name="Tapia R."/>
            <person name="Sutton G."/>
            <person name="Sims D."/>
            <person name="Brettin T."/>
        </authorList>
    </citation>
    <scope>NUCLEOTIDE SEQUENCE [LARGE SCALE GENOMIC DNA]</scope>
    <source>
        <strain>A0248</strain>
    </source>
</reference>
<dbReference type="EC" id="3.1.-.-" evidence="1"/>
<dbReference type="EMBL" id="CP001598">
    <property type="protein sequence ID" value="ACQ49737.1"/>
    <property type="molecule type" value="Genomic_DNA"/>
</dbReference>
<dbReference type="SMR" id="C3P975"/>
<dbReference type="KEGG" id="bai:BAA_4634"/>
<dbReference type="HOGENOM" id="CLU_098240_2_0_9"/>
<dbReference type="GO" id="GO:0005829">
    <property type="term" value="C:cytosol"/>
    <property type="evidence" value="ECO:0007669"/>
    <property type="project" value="TreeGrafter"/>
</dbReference>
<dbReference type="GO" id="GO:0004518">
    <property type="term" value="F:nuclease activity"/>
    <property type="evidence" value="ECO:0007669"/>
    <property type="project" value="UniProtKB-KW"/>
</dbReference>
<dbReference type="GO" id="GO:0000967">
    <property type="term" value="P:rRNA 5'-end processing"/>
    <property type="evidence" value="ECO:0007669"/>
    <property type="project" value="UniProtKB-UniRule"/>
</dbReference>
<dbReference type="CDD" id="cd16964">
    <property type="entry name" value="YqgF"/>
    <property type="match status" value="1"/>
</dbReference>
<dbReference type="FunFam" id="3.30.420.140:FF:000003">
    <property type="entry name" value="Putative pre-16S rRNA nuclease"/>
    <property type="match status" value="1"/>
</dbReference>
<dbReference type="Gene3D" id="3.30.420.140">
    <property type="entry name" value="YqgF/RNase H-like domain"/>
    <property type="match status" value="1"/>
</dbReference>
<dbReference type="HAMAP" id="MF_00651">
    <property type="entry name" value="Nuclease_YqgF"/>
    <property type="match status" value="1"/>
</dbReference>
<dbReference type="InterPro" id="IPR012337">
    <property type="entry name" value="RNaseH-like_sf"/>
</dbReference>
<dbReference type="InterPro" id="IPR005227">
    <property type="entry name" value="YqgF"/>
</dbReference>
<dbReference type="InterPro" id="IPR006641">
    <property type="entry name" value="YqgF/RNaseH-like_dom"/>
</dbReference>
<dbReference type="InterPro" id="IPR037027">
    <property type="entry name" value="YqgF/RNaseH-like_dom_sf"/>
</dbReference>
<dbReference type="NCBIfam" id="TIGR00250">
    <property type="entry name" value="RNAse_H_YqgF"/>
    <property type="match status" value="1"/>
</dbReference>
<dbReference type="PANTHER" id="PTHR33317">
    <property type="entry name" value="POLYNUCLEOTIDYL TRANSFERASE, RIBONUCLEASE H-LIKE SUPERFAMILY PROTEIN"/>
    <property type="match status" value="1"/>
</dbReference>
<dbReference type="PANTHER" id="PTHR33317:SF4">
    <property type="entry name" value="POLYNUCLEOTIDYL TRANSFERASE, RIBONUCLEASE H-LIKE SUPERFAMILY PROTEIN"/>
    <property type="match status" value="1"/>
</dbReference>
<dbReference type="Pfam" id="PF03652">
    <property type="entry name" value="RuvX"/>
    <property type="match status" value="1"/>
</dbReference>
<dbReference type="SMART" id="SM00732">
    <property type="entry name" value="YqgFc"/>
    <property type="match status" value="1"/>
</dbReference>
<dbReference type="SUPFAM" id="SSF53098">
    <property type="entry name" value="Ribonuclease H-like"/>
    <property type="match status" value="1"/>
</dbReference>
<proteinExistence type="inferred from homology"/>
<keyword id="KW-0963">Cytoplasm</keyword>
<keyword id="KW-0378">Hydrolase</keyword>
<keyword id="KW-0540">Nuclease</keyword>
<keyword id="KW-0690">Ribosome biogenesis</keyword>
<name>YQGF_BACAA</name>
<accession>C3P975</accession>
<feature type="chain" id="PRO_1000147459" description="Putative pre-16S rRNA nuclease">
    <location>
        <begin position="1"/>
        <end position="137"/>
    </location>
</feature>